<feature type="initiator methionine" description="Removed" evidence="15">
    <location>
        <position position="1"/>
    </location>
</feature>
<feature type="chain" id="PRO_0000142891" description="B-cell receptor-associated protein 31">
    <location>
        <begin position="2"/>
        <end position="246"/>
    </location>
</feature>
<feature type="topological domain" description="Lumenal" evidence="2">
    <location>
        <begin position="2"/>
        <end position="6"/>
    </location>
</feature>
<feature type="transmembrane region" description="Helical" evidence="2">
    <location>
        <begin position="7"/>
        <end position="27"/>
    </location>
</feature>
<feature type="topological domain" description="Cytoplasmic" evidence="2">
    <location>
        <begin position="28"/>
        <end position="43"/>
    </location>
</feature>
<feature type="transmembrane region" description="Helical" evidence="2">
    <location>
        <begin position="44"/>
        <end position="64"/>
    </location>
</feature>
<feature type="topological domain" description="Lumenal" evidence="2">
    <location>
        <begin position="65"/>
        <end position="102"/>
    </location>
</feature>
<feature type="transmembrane region" description="Helical" evidence="2">
    <location>
        <begin position="103"/>
        <end position="123"/>
    </location>
</feature>
<feature type="topological domain" description="Cytoplasmic" evidence="2">
    <location>
        <begin position="124"/>
        <end position="246"/>
    </location>
</feature>
<feature type="coiled-coil region" evidence="10">
    <location>
        <begin position="165"/>
        <end position="237"/>
    </location>
</feature>
<feature type="short sequence motif" description="Di-lysine motif">
    <location>
        <begin position="243"/>
        <end position="246"/>
    </location>
</feature>
<feature type="site" description="Cleavage; by caspase-8" evidence="2">
    <location>
        <begin position="164"/>
        <end position="165"/>
    </location>
</feature>
<feature type="site" description="Cleavage; by caspase-8" evidence="2">
    <location>
        <begin position="238"/>
        <end position="239"/>
    </location>
</feature>
<feature type="splice variant" id="VSP_043116" description="In isoform 2." evidence="17">
    <original>M</original>
    <variation>MGAEASSSWCPGTALPEERLSVKRASEISGFLGQGSSGEAALDVLTHVLEGAGNKLTSSCGKPSSNRM</variation>
    <location>
        <position position="1"/>
    </location>
</feature>
<feature type="mutagenesis site" description="Abolishes cleavage by caspases, inhibits apoptotic membrane blebbing and release of cytochrome c from mitochondria; when associated with A-238." evidence="3">
    <original>D</original>
    <variation>A</variation>
    <location>
        <position position="164"/>
    </location>
</feature>
<feature type="mutagenesis site" description="Abolishes cleavage by caspases, inhibits apoptotic membrane blebbing and release of cytochrome c from mitochondria; when associated with A-164." evidence="3">
    <original>D</original>
    <variation>A</variation>
    <location>
        <position position="238"/>
    </location>
</feature>
<feature type="sequence conflict" description="In Ref. 3; CAA57415." evidence="19" ref="3">
    <original>S</original>
    <variation>T</variation>
    <location>
        <position position="2"/>
    </location>
</feature>
<feature type="sequence conflict" description="In Ref. 7; AAH14323." evidence="19" ref="7">
    <original>K</original>
    <variation>E</variation>
    <location>
        <position position="72"/>
    </location>
</feature>
<feature type="sequence conflict" description="In Ref. 3; CAA57415." evidence="19" ref="3">
    <original>Q</original>
    <variation>E</variation>
    <location>
        <position position="208"/>
    </location>
</feature>
<feature type="helix" evidence="21">
    <location>
        <begin position="170"/>
        <end position="219"/>
    </location>
</feature>
<reference key="1">
    <citation type="journal article" date="1994" name="Genomics">
        <title>A new human gene (DXS1357E) with ubiquitous expression, located in Xq28 adjacent to the adrenoleukodystrophy gene.</title>
        <authorList>
            <person name="Mosser J."/>
            <person name="Sarde C.-O."/>
            <person name="Vicaire S."/>
            <person name="Yates J.R."/>
            <person name="Mandel J.-L."/>
        </authorList>
    </citation>
    <scope>NUCLEOTIDE SEQUENCE [MRNA] (ISOFORM 1)</scope>
</reference>
<reference key="2">
    <citation type="journal article" date="1996" name="Eur. J. Biochem.">
        <title>Molecular cloning and characterization of a transmembrane surface antigen in human cells.</title>
        <authorList>
            <person name="Li E."/>
            <person name="Bestagno M."/>
            <person name="Burrone O."/>
        </authorList>
    </citation>
    <scope>NUCLEOTIDE SEQUENCE [MRNA] (ISOFORM 1)</scope>
</reference>
<reference key="3">
    <citation type="journal article" date="1996" name="EMBO J.">
        <title>The specificity of association of the IgD molecule with the accessory proteins BAP31/BAP29 lies in the IgD transmembrane sequence.</title>
        <authorList>
            <person name="Adachi T."/>
            <person name="Schamel W.W.A."/>
            <person name="Kim K.-M."/>
            <person name="Watanabe T."/>
            <person name="Becker B."/>
            <person name="Nielsen P.J."/>
            <person name="Reth M."/>
        </authorList>
    </citation>
    <scope>NUCLEOTIDE SEQUENCE [MRNA] (ISOFORM 1)</scope>
    <source>
        <tissue>B-cell</tissue>
        <tissue>Promyelocytic leukemia</tissue>
    </source>
</reference>
<reference key="4">
    <citation type="journal article" date="2004" name="Nat. Genet.">
        <title>Complete sequencing and characterization of 21,243 full-length human cDNAs.</title>
        <authorList>
            <person name="Ota T."/>
            <person name="Suzuki Y."/>
            <person name="Nishikawa T."/>
            <person name="Otsuki T."/>
            <person name="Sugiyama T."/>
            <person name="Irie R."/>
            <person name="Wakamatsu A."/>
            <person name="Hayashi K."/>
            <person name="Sato H."/>
            <person name="Nagai K."/>
            <person name="Kimura K."/>
            <person name="Makita H."/>
            <person name="Sekine M."/>
            <person name="Obayashi M."/>
            <person name="Nishi T."/>
            <person name="Shibahara T."/>
            <person name="Tanaka T."/>
            <person name="Ishii S."/>
            <person name="Yamamoto J."/>
            <person name="Saito K."/>
            <person name="Kawai Y."/>
            <person name="Isono Y."/>
            <person name="Nakamura Y."/>
            <person name="Nagahari K."/>
            <person name="Murakami K."/>
            <person name="Yasuda T."/>
            <person name="Iwayanagi T."/>
            <person name="Wagatsuma M."/>
            <person name="Shiratori A."/>
            <person name="Sudo H."/>
            <person name="Hosoiri T."/>
            <person name="Kaku Y."/>
            <person name="Kodaira H."/>
            <person name="Kondo H."/>
            <person name="Sugawara M."/>
            <person name="Takahashi M."/>
            <person name="Kanda K."/>
            <person name="Yokoi T."/>
            <person name="Furuya T."/>
            <person name="Kikkawa E."/>
            <person name="Omura Y."/>
            <person name="Abe K."/>
            <person name="Kamihara K."/>
            <person name="Katsuta N."/>
            <person name="Sato K."/>
            <person name="Tanikawa M."/>
            <person name="Yamazaki M."/>
            <person name="Ninomiya K."/>
            <person name="Ishibashi T."/>
            <person name="Yamashita H."/>
            <person name="Murakawa K."/>
            <person name="Fujimori K."/>
            <person name="Tanai H."/>
            <person name="Kimata M."/>
            <person name="Watanabe M."/>
            <person name="Hiraoka S."/>
            <person name="Chiba Y."/>
            <person name="Ishida S."/>
            <person name="Ono Y."/>
            <person name="Takiguchi S."/>
            <person name="Watanabe S."/>
            <person name="Yosida M."/>
            <person name="Hotuta T."/>
            <person name="Kusano J."/>
            <person name="Kanehori K."/>
            <person name="Takahashi-Fujii A."/>
            <person name="Hara H."/>
            <person name="Tanase T.-O."/>
            <person name="Nomura Y."/>
            <person name="Togiya S."/>
            <person name="Komai F."/>
            <person name="Hara R."/>
            <person name="Takeuchi K."/>
            <person name="Arita M."/>
            <person name="Imose N."/>
            <person name="Musashino K."/>
            <person name="Yuuki H."/>
            <person name="Oshima A."/>
            <person name="Sasaki N."/>
            <person name="Aotsuka S."/>
            <person name="Yoshikawa Y."/>
            <person name="Matsunawa H."/>
            <person name="Ichihara T."/>
            <person name="Shiohata N."/>
            <person name="Sano S."/>
            <person name="Moriya S."/>
            <person name="Momiyama H."/>
            <person name="Satoh N."/>
            <person name="Takami S."/>
            <person name="Terashima Y."/>
            <person name="Suzuki O."/>
            <person name="Nakagawa S."/>
            <person name="Senoh A."/>
            <person name="Mizoguchi H."/>
            <person name="Goto Y."/>
            <person name="Shimizu F."/>
            <person name="Wakebe H."/>
            <person name="Hishigaki H."/>
            <person name="Watanabe T."/>
            <person name="Sugiyama A."/>
            <person name="Takemoto M."/>
            <person name="Kawakami B."/>
            <person name="Yamazaki M."/>
            <person name="Watanabe K."/>
            <person name="Kumagai A."/>
            <person name="Itakura S."/>
            <person name="Fukuzumi Y."/>
            <person name="Fujimori Y."/>
            <person name="Komiyama M."/>
            <person name="Tashiro H."/>
            <person name="Tanigami A."/>
            <person name="Fujiwara T."/>
            <person name="Ono T."/>
            <person name="Yamada K."/>
            <person name="Fujii Y."/>
            <person name="Ozaki K."/>
            <person name="Hirao M."/>
            <person name="Ohmori Y."/>
            <person name="Kawabata A."/>
            <person name="Hikiji T."/>
            <person name="Kobatake N."/>
            <person name="Inagaki H."/>
            <person name="Ikema Y."/>
            <person name="Okamoto S."/>
            <person name="Okitani R."/>
            <person name="Kawakami T."/>
            <person name="Noguchi S."/>
            <person name="Itoh T."/>
            <person name="Shigeta K."/>
            <person name="Senba T."/>
            <person name="Matsumura K."/>
            <person name="Nakajima Y."/>
            <person name="Mizuno T."/>
            <person name="Morinaga M."/>
            <person name="Sasaki M."/>
            <person name="Togashi T."/>
            <person name="Oyama M."/>
            <person name="Hata H."/>
            <person name="Watanabe M."/>
            <person name="Komatsu T."/>
            <person name="Mizushima-Sugano J."/>
            <person name="Satoh T."/>
            <person name="Shirai Y."/>
            <person name="Takahashi Y."/>
            <person name="Nakagawa K."/>
            <person name="Okumura K."/>
            <person name="Nagase T."/>
            <person name="Nomura N."/>
            <person name="Kikuchi H."/>
            <person name="Masuho Y."/>
            <person name="Yamashita R."/>
            <person name="Nakai K."/>
            <person name="Yada T."/>
            <person name="Nakamura Y."/>
            <person name="Ohara O."/>
            <person name="Isogai T."/>
            <person name="Sugano S."/>
        </authorList>
    </citation>
    <scope>NUCLEOTIDE SEQUENCE [LARGE SCALE MRNA] (ISOFORM 2)</scope>
    <source>
        <tissue>Stomach</tissue>
        <tissue>Trachea</tissue>
    </source>
</reference>
<reference key="5">
    <citation type="journal article" date="2005" name="Nature">
        <title>The DNA sequence of the human X chromosome.</title>
        <authorList>
            <person name="Ross M.T."/>
            <person name="Grafham D.V."/>
            <person name="Coffey A.J."/>
            <person name="Scherer S."/>
            <person name="McLay K."/>
            <person name="Muzny D."/>
            <person name="Platzer M."/>
            <person name="Howell G.R."/>
            <person name="Burrows C."/>
            <person name="Bird C.P."/>
            <person name="Frankish A."/>
            <person name="Lovell F.L."/>
            <person name="Howe K.L."/>
            <person name="Ashurst J.L."/>
            <person name="Fulton R.S."/>
            <person name="Sudbrak R."/>
            <person name="Wen G."/>
            <person name="Jones M.C."/>
            <person name="Hurles M.E."/>
            <person name="Andrews T.D."/>
            <person name="Scott C.E."/>
            <person name="Searle S."/>
            <person name="Ramser J."/>
            <person name="Whittaker A."/>
            <person name="Deadman R."/>
            <person name="Carter N.P."/>
            <person name="Hunt S.E."/>
            <person name="Chen R."/>
            <person name="Cree A."/>
            <person name="Gunaratne P."/>
            <person name="Havlak P."/>
            <person name="Hodgson A."/>
            <person name="Metzker M.L."/>
            <person name="Richards S."/>
            <person name="Scott G."/>
            <person name="Steffen D."/>
            <person name="Sodergren E."/>
            <person name="Wheeler D.A."/>
            <person name="Worley K.C."/>
            <person name="Ainscough R."/>
            <person name="Ambrose K.D."/>
            <person name="Ansari-Lari M.A."/>
            <person name="Aradhya S."/>
            <person name="Ashwell R.I."/>
            <person name="Babbage A.K."/>
            <person name="Bagguley C.L."/>
            <person name="Ballabio A."/>
            <person name="Banerjee R."/>
            <person name="Barker G.E."/>
            <person name="Barlow K.F."/>
            <person name="Barrett I.P."/>
            <person name="Bates K.N."/>
            <person name="Beare D.M."/>
            <person name="Beasley H."/>
            <person name="Beasley O."/>
            <person name="Beck A."/>
            <person name="Bethel G."/>
            <person name="Blechschmidt K."/>
            <person name="Brady N."/>
            <person name="Bray-Allen S."/>
            <person name="Bridgeman A.M."/>
            <person name="Brown A.J."/>
            <person name="Brown M.J."/>
            <person name="Bonnin D."/>
            <person name="Bruford E.A."/>
            <person name="Buhay C."/>
            <person name="Burch P."/>
            <person name="Burford D."/>
            <person name="Burgess J."/>
            <person name="Burrill W."/>
            <person name="Burton J."/>
            <person name="Bye J.M."/>
            <person name="Carder C."/>
            <person name="Carrel L."/>
            <person name="Chako J."/>
            <person name="Chapman J.C."/>
            <person name="Chavez D."/>
            <person name="Chen E."/>
            <person name="Chen G."/>
            <person name="Chen Y."/>
            <person name="Chen Z."/>
            <person name="Chinault C."/>
            <person name="Ciccodicola A."/>
            <person name="Clark S.Y."/>
            <person name="Clarke G."/>
            <person name="Clee C.M."/>
            <person name="Clegg S."/>
            <person name="Clerc-Blankenburg K."/>
            <person name="Clifford K."/>
            <person name="Cobley V."/>
            <person name="Cole C.G."/>
            <person name="Conquer J.S."/>
            <person name="Corby N."/>
            <person name="Connor R.E."/>
            <person name="David R."/>
            <person name="Davies J."/>
            <person name="Davis C."/>
            <person name="Davis J."/>
            <person name="Delgado O."/>
            <person name="Deshazo D."/>
            <person name="Dhami P."/>
            <person name="Ding Y."/>
            <person name="Dinh H."/>
            <person name="Dodsworth S."/>
            <person name="Draper H."/>
            <person name="Dugan-Rocha S."/>
            <person name="Dunham A."/>
            <person name="Dunn M."/>
            <person name="Durbin K.J."/>
            <person name="Dutta I."/>
            <person name="Eades T."/>
            <person name="Ellwood M."/>
            <person name="Emery-Cohen A."/>
            <person name="Errington H."/>
            <person name="Evans K.L."/>
            <person name="Faulkner L."/>
            <person name="Francis F."/>
            <person name="Frankland J."/>
            <person name="Fraser A.E."/>
            <person name="Galgoczy P."/>
            <person name="Gilbert J."/>
            <person name="Gill R."/>
            <person name="Gloeckner G."/>
            <person name="Gregory S.G."/>
            <person name="Gribble S."/>
            <person name="Griffiths C."/>
            <person name="Grocock R."/>
            <person name="Gu Y."/>
            <person name="Gwilliam R."/>
            <person name="Hamilton C."/>
            <person name="Hart E.A."/>
            <person name="Hawes A."/>
            <person name="Heath P.D."/>
            <person name="Heitmann K."/>
            <person name="Hennig S."/>
            <person name="Hernandez J."/>
            <person name="Hinzmann B."/>
            <person name="Ho S."/>
            <person name="Hoffs M."/>
            <person name="Howden P.J."/>
            <person name="Huckle E.J."/>
            <person name="Hume J."/>
            <person name="Hunt P.J."/>
            <person name="Hunt A.R."/>
            <person name="Isherwood J."/>
            <person name="Jacob L."/>
            <person name="Johnson D."/>
            <person name="Jones S."/>
            <person name="de Jong P.J."/>
            <person name="Joseph S.S."/>
            <person name="Keenan S."/>
            <person name="Kelly S."/>
            <person name="Kershaw J.K."/>
            <person name="Khan Z."/>
            <person name="Kioschis P."/>
            <person name="Klages S."/>
            <person name="Knights A.J."/>
            <person name="Kosiura A."/>
            <person name="Kovar-Smith C."/>
            <person name="Laird G.K."/>
            <person name="Langford C."/>
            <person name="Lawlor S."/>
            <person name="Leversha M."/>
            <person name="Lewis L."/>
            <person name="Liu W."/>
            <person name="Lloyd C."/>
            <person name="Lloyd D.M."/>
            <person name="Loulseged H."/>
            <person name="Loveland J.E."/>
            <person name="Lovell J.D."/>
            <person name="Lozado R."/>
            <person name="Lu J."/>
            <person name="Lyne R."/>
            <person name="Ma J."/>
            <person name="Maheshwari M."/>
            <person name="Matthews L.H."/>
            <person name="McDowall J."/>
            <person name="McLaren S."/>
            <person name="McMurray A."/>
            <person name="Meidl P."/>
            <person name="Meitinger T."/>
            <person name="Milne S."/>
            <person name="Miner G."/>
            <person name="Mistry S.L."/>
            <person name="Morgan M."/>
            <person name="Morris S."/>
            <person name="Mueller I."/>
            <person name="Mullikin J.C."/>
            <person name="Nguyen N."/>
            <person name="Nordsiek G."/>
            <person name="Nyakatura G."/>
            <person name="O'dell C.N."/>
            <person name="Okwuonu G."/>
            <person name="Palmer S."/>
            <person name="Pandian R."/>
            <person name="Parker D."/>
            <person name="Parrish J."/>
            <person name="Pasternak S."/>
            <person name="Patel D."/>
            <person name="Pearce A.V."/>
            <person name="Pearson D.M."/>
            <person name="Pelan S.E."/>
            <person name="Perez L."/>
            <person name="Porter K.M."/>
            <person name="Ramsey Y."/>
            <person name="Reichwald K."/>
            <person name="Rhodes S."/>
            <person name="Ridler K.A."/>
            <person name="Schlessinger D."/>
            <person name="Schueler M.G."/>
            <person name="Sehra H.K."/>
            <person name="Shaw-Smith C."/>
            <person name="Shen H."/>
            <person name="Sheridan E.M."/>
            <person name="Shownkeen R."/>
            <person name="Skuce C.D."/>
            <person name="Smith M.L."/>
            <person name="Sotheran E.C."/>
            <person name="Steingruber H.E."/>
            <person name="Steward C.A."/>
            <person name="Storey R."/>
            <person name="Swann R.M."/>
            <person name="Swarbreck D."/>
            <person name="Tabor P.E."/>
            <person name="Taudien S."/>
            <person name="Taylor T."/>
            <person name="Teague B."/>
            <person name="Thomas K."/>
            <person name="Thorpe A."/>
            <person name="Timms K."/>
            <person name="Tracey A."/>
            <person name="Trevanion S."/>
            <person name="Tromans A.C."/>
            <person name="d'Urso M."/>
            <person name="Verduzco D."/>
            <person name="Villasana D."/>
            <person name="Waldron L."/>
            <person name="Wall M."/>
            <person name="Wang Q."/>
            <person name="Warren J."/>
            <person name="Warry G.L."/>
            <person name="Wei X."/>
            <person name="West A."/>
            <person name="Whitehead S.L."/>
            <person name="Whiteley M.N."/>
            <person name="Wilkinson J.E."/>
            <person name="Willey D.L."/>
            <person name="Williams G."/>
            <person name="Williams L."/>
            <person name="Williamson A."/>
            <person name="Williamson H."/>
            <person name="Wilming L."/>
            <person name="Woodmansey R.L."/>
            <person name="Wray P.W."/>
            <person name="Yen J."/>
            <person name="Zhang J."/>
            <person name="Zhou J."/>
            <person name="Zoghbi H."/>
            <person name="Zorilla S."/>
            <person name="Buck D."/>
            <person name="Reinhardt R."/>
            <person name="Poustka A."/>
            <person name="Rosenthal A."/>
            <person name="Lehrach H."/>
            <person name="Meindl A."/>
            <person name="Minx P.J."/>
            <person name="Hillier L.W."/>
            <person name="Willard H.F."/>
            <person name="Wilson R.K."/>
            <person name="Waterston R.H."/>
            <person name="Rice C.M."/>
            <person name="Vaudin M."/>
            <person name="Coulson A."/>
            <person name="Nelson D.L."/>
            <person name="Weinstock G."/>
            <person name="Sulston J.E."/>
            <person name="Durbin R.M."/>
            <person name="Hubbard T."/>
            <person name="Gibbs R.A."/>
            <person name="Beck S."/>
            <person name="Rogers J."/>
            <person name="Bentley D.R."/>
        </authorList>
    </citation>
    <scope>NUCLEOTIDE SEQUENCE [LARGE SCALE GENOMIC DNA]</scope>
</reference>
<reference key="6">
    <citation type="submission" date="2005-09" db="EMBL/GenBank/DDBJ databases">
        <authorList>
            <person name="Mural R.J."/>
            <person name="Istrail S."/>
            <person name="Sutton G.G."/>
            <person name="Florea L."/>
            <person name="Halpern A.L."/>
            <person name="Mobarry C.M."/>
            <person name="Lippert R."/>
            <person name="Walenz B."/>
            <person name="Shatkay H."/>
            <person name="Dew I."/>
            <person name="Miller J.R."/>
            <person name="Flanigan M.J."/>
            <person name="Edwards N.J."/>
            <person name="Bolanos R."/>
            <person name="Fasulo D."/>
            <person name="Halldorsson B.V."/>
            <person name="Hannenhalli S."/>
            <person name="Turner R."/>
            <person name="Yooseph S."/>
            <person name="Lu F."/>
            <person name="Nusskern D.R."/>
            <person name="Shue B.C."/>
            <person name="Zheng X.H."/>
            <person name="Zhong F."/>
            <person name="Delcher A.L."/>
            <person name="Huson D.H."/>
            <person name="Kravitz S.A."/>
            <person name="Mouchard L."/>
            <person name="Reinert K."/>
            <person name="Remington K.A."/>
            <person name="Clark A.G."/>
            <person name="Waterman M.S."/>
            <person name="Eichler E.E."/>
            <person name="Adams M.D."/>
            <person name="Hunkapiller M.W."/>
            <person name="Myers E.W."/>
            <person name="Venter J.C."/>
        </authorList>
    </citation>
    <scope>NUCLEOTIDE SEQUENCE [LARGE SCALE GENOMIC DNA]</scope>
</reference>
<reference key="7">
    <citation type="journal article" date="2004" name="Genome Res.">
        <title>The status, quality, and expansion of the NIH full-length cDNA project: the Mammalian Gene Collection (MGC).</title>
        <authorList>
            <consortium name="The MGC Project Team"/>
        </authorList>
    </citation>
    <scope>NUCLEOTIDE SEQUENCE [LARGE SCALE MRNA] (ISOFORM 1)</scope>
    <source>
        <tissue>Lung</tissue>
        <tissue>Pancreas</tissue>
    </source>
</reference>
<reference key="8">
    <citation type="submission" date="1995-10" db="EMBL/GenBank/DDBJ databases">
        <authorList>
            <person name="Eichler E.E."/>
            <person name="Lu F."/>
            <person name="Shen Y."/>
            <person name="Muzny D.M."/>
            <person name="Gibbs R.A."/>
            <person name="Nelson D.L."/>
        </authorList>
    </citation>
    <scope>NUCLEOTIDE SEQUENCE [GENOMIC DNA] OF 121-246</scope>
</reference>
<reference key="9">
    <citation type="journal article" date="1997" name="J. Cell Biol.">
        <title>p28 Bap31, a Bcl-2/Bcl-XL- and procaspase-8-associated protein in the endoplasmic reticulum.</title>
        <authorList>
            <person name="Ng F.W.H."/>
            <person name="Nguyen M."/>
            <person name="Kwan T."/>
            <person name="Branton P.E."/>
            <person name="Nicholson D.W."/>
            <person name="Cromlish J.A."/>
            <person name="Shore G.C."/>
        </authorList>
    </citation>
    <scope>PROTEIN SEQUENCE OF 2-11</scope>
    <scope>SUBCELLULAR LOCATION</scope>
    <scope>INTERACTION WITH BCL2; BCL2L1 AND CASP8</scope>
</reference>
<reference key="10">
    <citation type="journal article" date="1997" name="J. Cell Biol.">
        <title>Export of cellubrevin from the endoplasmic reticulum is controlled by BAP31.</title>
        <authorList>
            <person name="Annaert W.G."/>
            <person name="Becker B."/>
            <person name="Kistner U."/>
            <person name="Reth M."/>
            <person name="Jahn R."/>
        </authorList>
    </citation>
    <scope>PROTEIN SEQUENCE OF 80-96 AND 205-214</scope>
    <scope>SUBCELLULAR LOCATION</scope>
    <scope>FUNCTION</scope>
</reference>
<reference key="11">
    <citation type="journal article" date="2000" name="Mol. Cell. Biol.">
        <title>Caspase-resistant BAP31 inhibits Fas-mediated apoptotic membrane fragmentation and release of cytochrome c from mitochondria.</title>
        <authorList>
            <person name="Nguyen M."/>
            <person name="Breckenridge D.G."/>
            <person name="Ducret A."/>
            <person name="Shore G.C."/>
        </authorList>
    </citation>
    <scope>MUTAGENESIS OF ASP-164 AND ASP-238</scope>
    <scope>ROLE IN APOPTOSIS</scope>
</reference>
<reference key="12">
    <citation type="journal article" date="2001" name="J. Biol. Chem.">
        <title>Proteomics characterization of abundant Golgi membrane proteins.</title>
        <authorList>
            <person name="Bell A.W."/>
            <person name="Ward M.A."/>
            <person name="Blackstock W.P."/>
            <person name="Freeman H.N.M."/>
            <person name="Choudhary J.S."/>
            <person name="Lewis A.P."/>
            <person name="Chotai D."/>
            <person name="Fazel A."/>
            <person name="Gushue J.N."/>
            <person name="Paiement J."/>
            <person name="Palcy S."/>
            <person name="Chevet E."/>
            <person name="Lafreniere-Roula M."/>
            <person name="Solari R."/>
            <person name="Thomas D.Y."/>
            <person name="Rowley A."/>
            <person name="Bergeron J.J.M."/>
        </authorList>
    </citation>
    <scope>SUBCELLULAR LOCATION</scope>
</reference>
<reference key="13">
    <citation type="journal article" date="2001" name="J. Histochem. Cytochem.">
        <title>Endoplasmic reticulum membrane-sorting protein of lymphocytes (BAP31) is highly expressed in neurons and discrete endocrine cells.</title>
        <authorList>
            <person name="Manley H.A."/>
            <person name="Lennon V.A."/>
        </authorList>
    </citation>
    <scope>TISSUE SPECIFICITY</scope>
</reference>
<reference key="14">
    <citation type="journal article" date="2002" name="Proc. Natl. Acad. Sci. U.S.A.">
        <title>The procaspase-8 isoform, procaspase-8L, recruited to the BAP31 complex at the endoplasmic reticulum.</title>
        <authorList>
            <person name="Breckenridge D.G."/>
            <person name="Nguyen M."/>
            <person name="Kuppig S."/>
            <person name="Reth M."/>
            <person name="Shore G.C."/>
        </authorList>
    </citation>
    <scope>INTERACTION WITH CASP8 ISOFORM 9</scope>
</reference>
<reference key="15">
    <citation type="journal article" date="2004" name="Mol. Cell. Biol.">
        <title>The yeast split-ubiquitin membrane protein two-hybrid screen identifies BAP31 as a regulator of the turnover of endoplasmic reticulum-associated protein tyrosine phosphatase-like B.</title>
        <authorList>
            <person name="Wang B."/>
            <person name="Pelletier J."/>
            <person name="Massaad M.J."/>
            <person name="Herscovics A."/>
            <person name="Shore G.C."/>
        </authorList>
    </citation>
    <scope>INTERACTION WITH HACD2</scope>
</reference>
<reference key="16">
    <citation type="journal article" date="2002" name="Am. J. Hum. Genet.">
        <title>Contiguous deletion of the X-linked adrenoleukodystrophy gene (ABCD1) and DXS1357E: a novel neonatal phenotype similar to peroxisomal biogenesis disorders.</title>
        <authorList>
            <person name="Corzo D."/>
            <person name="Gibson W."/>
            <person name="Johnson K."/>
            <person name="Mitchell G."/>
            <person name="LePage G."/>
            <person name="Cox G.F."/>
            <person name="Casey R."/>
            <person name="Zeiss C."/>
            <person name="Tyson H."/>
            <person name="Cutting G.R."/>
            <person name="Raymond G.V."/>
            <person name="Smith K.D."/>
            <person name="Watkins P.A."/>
            <person name="Moser A.B."/>
            <person name="Moser H.W."/>
            <person name="Steinberg S.J."/>
        </authorList>
    </citation>
    <scope>INVOLVEMENT IN CONTIGUOUS ABCD1/DXS1375E DELETION SYNDROME</scope>
</reference>
<reference key="17">
    <citation type="journal article" date="2008" name="Mol. Biol. Cell">
        <title>Bap31 is an itinerant protein that moves between the peripheral endoplasmic reticulum (ER) and a juxtanuclear compartment related to ER-associated Degradation.</title>
        <authorList>
            <person name="Wakana Y."/>
            <person name="Takai S."/>
            <person name="Nakajima K."/>
            <person name="Tani K."/>
            <person name="Yamamoto A."/>
            <person name="Watson P."/>
            <person name="Stephens D.J."/>
            <person name="Hauri H.P."/>
            <person name="Tagaya M."/>
        </authorList>
    </citation>
    <scope>FUNCTION</scope>
</reference>
<reference key="18">
    <citation type="journal article" date="2011" name="BMC Syst. Biol.">
        <title>Initial characterization of the human central proteome.</title>
        <authorList>
            <person name="Burkard T.R."/>
            <person name="Planyavsky M."/>
            <person name="Kaupe I."/>
            <person name="Breitwieser F.P."/>
            <person name="Buerckstuemmer T."/>
            <person name="Bennett K.L."/>
            <person name="Superti-Furga G."/>
            <person name="Colinge J."/>
        </authorList>
    </citation>
    <scope>IDENTIFICATION BY MASS SPECTROMETRY [LARGE SCALE ANALYSIS]</scope>
</reference>
<reference key="19">
    <citation type="journal article" date="2013" name="Am. J. Hum. Genet.">
        <title>Mutations in BCAP31 cause a severe X-linked phenotype with deafness, dystonia, and central hypomyelination and disorganize the Golgi apparatus.</title>
        <authorList>
            <person name="Cacciagli P."/>
            <person name="Sutera-Sardo J."/>
            <person name="Borges-Correia A."/>
            <person name="Roux J.C."/>
            <person name="Dorboz I."/>
            <person name="Desvignes J.P."/>
            <person name="Badens C."/>
            <person name="Delepine M."/>
            <person name="Lathrop M."/>
            <person name="Cau P."/>
            <person name="Levy N."/>
            <person name="Girard N."/>
            <person name="Sarda P."/>
            <person name="Boespflug-Tanguy O."/>
            <person name="Villard L."/>
        </authorList>
    </citation>
    <scope>INVOLVEMENT IN DDCH</scope>
</reference>
<reference key="20">
    <citation type="journal article" date="2014" name="J. Proteomics">
        <title>An enzyme assisted RP-RPLC approach for in-depth analysis of human liver phosphoproteome.</title>
        <authorList>
            <person name="Bian Y."/>
            <person name="Song C."/>
            <person name="Cheng K."/>
            <person name="Dong M."/>
            <person name="Wang F."/>
            <person name="Huang J."/>
            <person name="Sun D."/>
            <person name="Wang L."/>
            <person name="Ye M."/>
            <person name="Zou H."/>
        </authorList>
    </citation>
    <scope>IDENTIFICATION BY MASS SPECTROMETRY [LARGE SCALE ANALYSIS]</scope>
    <source>
        <tissue>Liver</tissue>
    </source>
</reference>
<reference key="21">
    <citation type="journal article" date="2014" name="Mol. Biol. Cell">
        <title>Mutations in Fis1 disrupt orderly disposal of defective mitochondria.</title>
        <authorList>
            <person name="Shen Q."/>
            <person name="Yamano K."/>
            <person name="Head B.P."/>
            <person name="Kawajiri S."/>
            <person name="Cheung J.T."/>
            <person name="Wang C."/>
            <person name="Cho J.H."/>
            <person name="Hattori N."/>
            <person name="Youle R.J."/>
            <person name="van der Bliek A.M."/>
        </authorList>
    </citation>
    <scope>INTERACTION WITH DNM1L</scope>
</reference>
<reference key="22">
    <citation type="journal article" date="2015" name="Proteomics">
        <title>N-terminome analysis of the human mitochondrial proteome.</title>
        <authorList>
            <person name="Vaca Jacome A.S."/>
            <person name="Rabilloud T."/>
            <person name="Schaeffer-Reiss C."/>
            <person name="Rompais M."/>
            <person name="Ayoub D."/>
            <person name="Lane L."/>
            <person name="Bairoch A."/>
            <person name="Van Dorsselaer A."/>
            <person name="Carapito C."/>
        </authorList>
    </citation>
    <scope>IDENTIFICATION BY MASS SPECTROMETRY [LARGE SCALE ANALYSIS]</scope>
</reference>
<reference key="23">
    <citation type="journal article" date="2015" name="Virology">
        <title>Interaction between human BAP31 and respiratory syncytial virus small hydrophobic (SH) protein.</title>
        <authorList>
            <person name="Li Y."/>
            <person name="Jain N."/>
            <person name="Limpanawat S."/>
            <person name="To J."/>
            <person name="Quistgaard E.M."/>
            <person name="Nordlund P."/>
            <person name="Thanabalu T."/>
            <person name="Torres J."/>
        </authorList>
    </citation>
    <scope>INTERACTION WITH HRSV SH (MICROBIAL INFECTION)</scope>
</reference>
<reference key="24">
    <citation type="journal article" date="2019" name="Sci. Adv.">
        <title>BAP31 regulates mitochondrial function via interaction with Tom40 within ER-mitochondria contact sites.</title>
        <authorList>
            <person name="Namba T."/>
        </authorList>
    </citation>
    <scope>FUNCTION</scope>
    <scope>INTERACTION WITH TOMM40; NDUFS4; NDUFB11; VDAC1 AND BCL2</scope>
    <scope>SUBCELLULAR LOCATION</scope>
</reference>
<reference key="25">
    <citation type="journal article" date="2015" name="J. Virol.">
        <title>The endoplasmic reticulum membrane J protein C18 executes a distinct role in promoting simian virus 40 membrane penetration.</title>
        <authorList>
            <person name="Bagchi P."/>
            <person name="Walczak C.P."/>
            <person name="Tsai B."/>
        </authorList>
    </citation>
    <scope>SUBCELLULAR LOCATION (MICROBIAL INFECTION)</scope>
</reference>
<reference key="26">
    <citation type="journal article" date="2013" name="PLoS ONE">
        <title>Structural and biophysical characterization of the cytoplasmic domains of human BAP29 and BAP31.</title>
        <authorList>
            <person name="Quistgaard E.M."/>
            <person name="Low C."/>
            <person name="Moberg P."/>
            <person name="Guettou F."/>
            <person name="Maddi K."/>
            <person name="Nordlund P."/>
        </authorList>
    </citation>
    <scope>X-RAY CRYSTALLOGRAPHY (2.1 ANGSTROMS) OF 168-233</scope>
    <scope>SUBUNIT</scope>
    <scope>COILED-COIL</scope>
</reference>
<name>BAP31_HUMAN</name>
<gene>
    <name evidence="20" type="primary">BCAP31</name>
    <name evidence="18" type="synonym">BAP31</name>
    <name type="synonym">DXS1357E</name>
</gene>
<accession>P51572</accession>
<accession>B3KQ79</accession>
<accession>D3DWV5</accession>
<accession>Q13836</accession>
<accession>Q96CF0</accession>
<evidence type="ECO:0000250" key="1">
    <source>
        <dbReference type="UniProtKB" id="Q61335"/>
    </source>
</evidence>
<evidence type="ECO:0000255" key="2"/>
<evidence type="ECO:0000269" key="3">
    <source>
    </source>
</evidence>
<evidence type="ECO:0000269" key="4">
    <source>
    </source>
</evidence>
<evidence type="ECO:0000269" key="5">
    <source>
    </source>
</evidence>
<evidence type="ECO:0000269" key="6">
    <source>
    </source>
</evidence>
<evidence type="ECO:0000269" key="7">
    <source>
    </source>
</evidence>
<evidence type="ECO:0000269" key="8">
    <source>
    </source>
</evidence>
<evidence type="ECO:0000269" key="9">
    <source>
    </source>
</evidence>
<evidence type="ECO:0000269" key="10">
    <source>
    </source>
</evidence>
<evidence type="ECO:0000269" key="11">
    <source>
    </source>
</evidence>
<evidence type="ECO:0000269" key="12">
    <source>
    </source>
</evidence>
<evidence type="ECO:0000269" key="13">
    <source>
    </source>
</evidence>
<evidence type="ECO:0000269" key="14">
    <source>
    </source>
</evidence>
<evidence type="ECO:0000269" key="15">
    <source>
    </source>
</evidence>
<evidence type="ECO:0000269" key="16">
    <source>
    </source>
</evidence>
<evidence type="ECO:0000303" key="17">
    <source>
    </source>
</evidence>
<evidence type="ECO:0000303" key="18">
    <source>
    </source>
</evidence>
<evidence type="ECO:0000305" key="19"/>
<evidence type="ECO:0000312" key="20">
    <source>
        <dbReference type="HGNC" id="HGNC:16695"/>
    </source>
</evidence>
<evidence type="ECO:0007829" key="21">
    <source>
        <dbReference type="PDB" id="4JZP"/>
    </source>
</evidence>
<organism>
    <name type="scientific">Homo sapiens</name>
    <name type="common">Human</name>
    <dbReference type="NCBI Taxonomy" id="9606"/>
    <lineage>
        <taxon>Eukaryota</taxon>
        <taxon>Metazoa</taxon>
        <taxon>Chordata</taxon>
        <taxon>Craniata</taxon>
        <taxon>Vertebrata</taxon>
        <taxon>Euteleostomi</taxon>
        <taxon>Mammalia</taxon>
        <taxon>Eutheria</taxon>
        <taxon>Euarchontoglires</taxon>
        <taxon>Primates</taxon>
        <taxon>Haplorrhini</taxon>
        <taxon>Catarrhini</taxon>
        <taxon>Hominidae</taxon>
        <taxon>Homo</taxon>
    </lineage>
</organism>
<sequence length="246" mass="27992">MSLQWTAVATFLYAEVFVVLLLCIPFISPKRWQKIFKSRLVELLVSYGNTFFVVLIVILVLLVIDAVREIRKYDDVTEKVNLQNNPGAMEHFHMKLFRAQRNLYIAGFSLLLSFLLRRLVTLISQQATLLASNEAFKKQAESASEAAKKYMEENDQLKKGAAVDGGKLDVGNAEVKLEEENRSLKADLQKLKDELASTKQKLEKAENQVLAMRKQSEGLTKEYDRLLEEHAKLQAAVDGPMDKKEE</sequence>
<proteinExistence type="evidence at protein level"/>
<protein>
    <recommendedName>
        <fullName>B-cell receptor-associated protein 31</fullName>
        <shortName>BCR-associated protein 31</shortName>
        <shortName>Bap31</shortName>
    </recommendedName>
    <alternativeName>
        <fullName>6C6-AG tumor-associated antigen</fullName>
    </alternativeName>
    <alternativeName>
        <fullName>Protein CDM</fullName>
    </alternativeName>
    <alternativeName>
        <fullName>p28</fullName>
    </alternativeName>
</protein>
<dbReference type="EMBL" id="Z31696">
    <property type="protein sequence ID" value="CAA83501.1"/>
    <property type="molecule type" value="mRNA"/>
</dbReference>
<dbReference type="EMBL" id="X81109">
    <property type="protein sequence ID" value="CAA57015.1"/>
    <property type="molecule type" value="mRNA"/>
</dbReference>
<dbReference type="EMBL" id="X81817">
    <property type="protein sequence ID" value="CAA57415.1"/>
    <property type="molecule type" value="mRNA"/>
</dbReference>
<dbReference type="EMBL" id="AK057613">
    <property type="protein sequence ID" value="BAG51941.1"/>
    <property type="molecule type" value="mRNA"/>
</dbReference>
<dbReference type="EMBL" id="AK125631">
    <property type="protein sequence ID" value="BAG54226.1"/>
    <property type="molecule type" value="mRNA"/>
</dbReference>
<dbReference type="EMBL" id="U52111">
    <property type="status" value="NOT_ANNOTATED_CDS"/>
    <property type="molecule type" value="Genomic_DNA"/>
</dbReference>
<dbReference type="EMBL" id="CH471172">
    <property type="protein sequence ID" value="EAW72818.1"/>
    <property type="molecule type" value="Genomic_DNA"/>
</dbReference>
<dbReference type="EMBL" id="CH471172">
    <property type="protein sequence ID" value="EAW72819.1"/>
    <property type="molecule type" value="Genomic_DNA"/>
</dbReference>
<dbReference type="EMBL" id="CH471172">
    <property type="protein sequence ID" value="EAW72820.1"/>
    <property type="molecule type" value="Genomic_DNA"/>
</dbReference>
<dbReference type="EMBL" id="CH471172">
    <property type="protein sequence ID" value="EAW72821.1"/>
    <property type="molecule type" value="Genomic_DNA"/>
</dbReference>
<dbReference type="EMBL" id="CH471172">
    <property type="protein sequence ID" value="EAW72823.1"/>
    <property type="molecule type" value="Genomic_DNA"/>
</dbReference>
<dbReference type="EMBL" id="CH471172">
    <property type="protein sequence ID" value="EAW72824.1"/>
    <property type="molecule type" value="Genomic_DNA"/>
</dbReference>
<dbReference type="EMBL" id="CH471172">
    <property type="protein sequence ID" value="EAW72825.1"/>
    <property type="molecule type" value="Genomic_DNA"/>
</dbReference>
<dbReference type="EMBL" id="BC014323">
    <property type="protein sequence ID" value="AAH14323.1"/>
    <property type="molecule type" value="mRNA"/>
</dbReference>
<dbReference type="EMBL" id="BC065292">
    <property type="protein sequence ID" value="AAH65292.1"/>
    <property type="molecule type" value="mRNA"/>
</dbReference>
<dbReference type="EMBL" id="U36341">
    <property type="protein sequence ID" value="AAA79508.1"/>
    <property type="molecule type" value="Genomic_DNA"/>
</dbReference>
<dbReference type="CCDS" id="CCDS14727.1">
    <molecule id="P51572-1"/>
</dbReference>
<dbReference type="CCDS" id="CCDS48191.1">
    <molecule id="P51572-2"/>
</dbReference>
<dbReference type="PIR" id="S44279">
    <property type="entry name" value="S44279"/>
</dbReference>
<dbReference type="RefSeq" id="NP_001132913.1">
    <molecule id="P51572-1"/>
    <property type="nucleotide sequence ID" value="NM_001139441.1"/>
</dbReference>
<dbReference type="RefSeq" id="NP_001132929.1">
    <molecule id="P51572-2"/>
    <property type="nucleotide sequence ID" value="NM_001139457.2"/>
</dbReference>
<dbReference type="RefSeq" id="NP_001243376.1">
    <molecule id="P51572-1"/>
    <property type="nucleotide sequence ID" value="NM_001256447.2"/>
</dbReference>
<dbReference type="RefSeq" id="NP_005736.3">
    <molecule id="P51572-1"/>
    <property type="nucleotide sequence ID" value="NM_005745.7"/>
</dbReference>
<dbReference type="PDB" id="4JZL">
    <property type="method" value="X-ray"/>
    <property type="resolution" value="2.20 A"/>
    <property type="chains" value="A/B/C/D=168-233"/>
</dbReference>
<dbReference type="PDB" id="4JZP">
    <property type="method" value="X-ray"/>
    <property type="resolution" value="2.10 A"/>
    <property type="chains" value="A/B=168-233"/>
</dbReference>
<dbReference type="PDB" id="8XWX">
    <property type="method" value="X-ray"/>
    <property type="resolution" value="2.69 A"/>
    <property type="chains" value="D/E/F/G=168-233"/>
</dbReference>
<dbReference type="PDBsum" id="4JZL"/>
<dbReference type="PDBsum" id="4JZP"/>
<dbReference type="PDBsum" id="8XWX"/>
<dbReference type="SMR" id="P51572"/>
<dbReference type="BioGRID" id="115437">
    <property type="interactions" value="580"/>
</dbReference>
<dbReference type="FunCoup" id="P51572">
    <property type="interactions" value="2292"/>
</dbReference>
<dbReference type="IntAct" id="P51572">
    <property type="interactions" value="130"/>
</dbReference>
<dbReference type="MINT" id="P51572"/>
<dbReference type="STRING" id="9606.ENSP00000392330"/>
<dbReference type="ChEMBL" id="CHEMBL4295778"/>
<dbReference type="TCDB" id="3.A.5.9.1">
    <property type="family name" value="the general secretory pathway (sec) family"/>
</dbReference>
<dbReference type="GlyGen" id="P51572">
    <property type="glycosylation" value="2 sites, 1 O-linked glycan (1 site)"/>
</dbReference>
<dbReference type="iPTMnet" id="P51572"/>
<dbReference type="MetOSite" id="P51572"/>
<dbReference type="PhosphoSitePlus" id="P51572"/>
<dbReference type="SwissPalm" id="P51572"/>
<dbReference type="BioMuta" id="BCAP31"/>
<dbReference type="DMDM" id="1705725"/>
<dbReference type="jPOST" id="P51572"/>
<dbReference type="MassIVE" id="P51572"/>
<dbReference type="PaxDb" id="9606-ENSP00000392330"/>
<dbReference type="PeptideAtlas" id="P51572"/>
<dbReference type="ProteomicsDB" id="56335">
    <molecule id="P51572-1"/>
</dbReference>
<dbReference type="ProteomicsDB" id="56336">
    <molecule id="P51572-2"/>
</dbReference>
<dbReference type="Pumba" id="P51572"/>
<dbReference type="TopDownProteomics" id="P51572-1">
    <molecule id="P51572-1"/>
</dbReference>
<dbReference type="TopDownProteomics" id="P51572-2">
    <molecule id="P51572-2"/>
</dbReference>
<dbReference type="Antibodypedia" id="590">
    <property type="antibodies" value="510 antibodies from 44 providers"/>
</dbReference>
<dbReference type="DNASU" id="10134"/>
<dbReference type="Ensembl" id="ENST00000345046.12">
    <molecule id="P51572-1"/>
    <property type="protein sequence ID" value="ENSP00000343458.6"/>
    <property type="gene ID" value="ENSG00000185825.17"/>
</dbReference>
<dbReference type="Ensembl" id="ENST00000458587.8">
    <molecule id="P51572-2"/>
    <property type="protein sequence ID" value="ENSP00000392330.2"/>
    <property type="gene ID" value="ENSG00000185825.17"/>
</dbReference>
<dbReference type="Ensembl" id="ENST00000647529.1">
    <molecule id="P51572-1"/>
    <property type="protein sequence ID" value="ENSP00000494052.1"/>
    <property type="gene ID" value="ENSG00000185825.17"/>
</dbReference>
<dbReference type="Ensembl" id="ENST00000672675.1">
    <molecule id="P51572-1"/>
    <property type="protein sequence ID" value="ENSP00000499882.1"/>
    <property type="gene ID" value="ENSG00000185825.17"/>
</dbReference>
<dbReference type="GeneID" id="10134"/>
<dbReference type="KEGG" id="hsa:10134"/>
<dbReference type="MANE-Select" id="ENST00000345046.12">
    <property type="protein sequence ID" value="ENSP00000343458.6"/>
    <property type="RefSeq nucleotide sequence ID" value="NM_001256447.2"/>
    <property type="RefSeq protein sequence ID" value="NP_001243376.1"/>
</dbReference>
<dbReference type="UCSC" id="uc004fid.4">
    <molecule id="P51572-1"/>
    <property type="organism name" value="human"/>
</dbReference>
<dbReference type="AGR" id="HGNC:16695"/>
<dbReference type="CTD" id="10134"/>
<dbReference type="DisGeNET" id="10134"/>
<dbReference type="GeneCards" id="BCAP31"/>
<dbReference type="HGNC" id="HGNC:16695">
    <property type="gene designation" value="BCAP31"/>
</dbReference>
<dbReference type="HPA" id="ENSG00000185825">
    <property type="expression patterns" value="Low tissue specificity"/>
</dbReference>
<dbReference type="MalaCards" id="BCAP31"/>
<dbReference type="MIM" id="300398">
    <property type="type" value="gene"/>
</dbReference>
<dbReference type="MIM" id="300475">
    <property type="type" value="phenotype"/>
</dbReference>
<dbReference type="neXtProt" id="NX_P51572"/>
<dbReference type="OpenTargets" id="ENSG00000185825"/>
<dbReference type="Orphanet" id="369942">
    <property type="disease" value="CADDS"/>
</dbReference>
<dbReference type="Orphanet" id="369939">
    <property type="disease" value="Severe motor and intellectual disabilities-sensorineural deafness-dystonia syndrome"/>
</dbReference>
<dbReference type="PharmGKB" id="PA128394569"/>
<dbReference type="VEuPathDB" id="HostDB:ENSG00000185825"/>
<dbReference type="eggNOG" id="KOG1962">
    <property type="taxonomic scope" value="Eukaryota"/>
</dbReference>
<dbReference type="GeneTree" id="ENSGT00390000011863"/>
<dbReference type="HOGENOM" id="CLU_070975_1_0_1"/>
<dbReference type="InParanoid" id="P51572"/>
<dbReference type="OMA" id="CEGQKDK"/>
<dbReference type="OrthoDB" id="435607at2759"/>
<dbReference type="PAN-GO" id="P51572">
    <property type="GO annotations" value="3 GO annotations based on evolutionary models"/>
</dbReference>
<dbReference type="PhylomeDB" id="P51572"/>
<dbReference type="TreeFam" id="TF315310"/>
<dbReference type="PathwayCommons" id="P51572"/>
<dbReference type="Reactome" id="R-HSA-111465">
    <property type="pathway name" value="Apoptotic cleavage of cellular proteins"/>
</dbReference>
<dbReference type="Reactome" id="R-HSA-75153">
    <property type="pathway name" value="Apoptotic execution phase"/>
</dbReference>
<dbReference type="Reactome" id="R-HSA-8980692">
    <property type="pathway name" value="RHOA GTPase cycle"/>
</dbReference>
<dbReference type="Reactome" id="R-HSA-983170">
    <property type="pathway name" value="Antigen Presentation: Folding, assembly and peptide loading of class I MHC"/>
</dbReference>
<dbReference type="Reactome" id="R-HSA-9833110">
    <property type="pathway name" value="RSV-host interactions"/>
</dbReference>
<dbReference type="SignaLink" id="P51572"/>
<dbReference type="BioGRID-ORCS" id="10134">
    <property type="hits" value="52 hits in 786 CRISPR screens"/>
</dbReference>
<dbReference type="ChiTaRS" id="BCAP31">
    <property type="organism name" value="human"/>
</dbReference>
<dbReference type="EvolutionaryTrace" id="P51572"/>
<dbReference type="GeneWiki" id="BCAP31"/>
<dbReference type="GenomeRNAi" id="10134"/>
<dbReference type="Pharos" id="P51572">
    <property type="development level" value="Tbio"/>
</dbReference>
<dbReference type="PRO" id="PR:P51572"/>
<dbReference type="Proteomes" id="UP000005640">
    <property type="component" value="Chromosome X"/>
</dbReference>
<dbReference type="RNAct" id="P51572">
    <property type="molecule type" value="protein"/>
</dbReference>
<dbReference type="Bgee" id="ENSG00000185825">
    <property type="expression patterns" value="Expressed in left adrenal gland and 203 other cell types or tissues"/>
</dbReference>
<dbReference type="ExpressionAtlas" id="P51572">
    <property type="expression patterns" value="baseline and differential"/>
</dbReference>
<dbReference type="GO" id="GO:0030136">
    <property type="term" value="C:clathrin-coated vesicle"/>
    <property type="evidence" value="ECO:0007669"/>
    <property type="project" value="Ensembl"/>
</dbReference>
<dbReference type="GO" id="GO:0005829">
    <property type="term" value="C:cytosol"/>
    <property type="evidence" value="ECO:0000304"/>
    <property type="project" value="Reactome"/>
</dbReference>
<dbReference type="GO" id="GO:0005783">
    <property type="term" value="C:endoplasmic reticulum"/>
    <property type="evidence" value="ECO:0000314"/>
    <property type="project" value="HPA"/>
</dbReference>
<dbReference type="GO" id="GO:0005789">
    <property type="term" value="C:endoplasmic reticulum membrane"/>
    <property type="evidence" value="ECO:0000318"/>
    <property type="project" value="GO_Central"/>
</dbReference>
<dbReference type="GO" id="GO:0033116">
    <property type="term" value="C:endoplasmic reticulum-Golgi intermediate compartment membrane"/>
    <property type="evidence" value="ECO:0007669"/>
    <property type="project" value="UniProtKB-SubCell"/>
</dbReference>
<dbReference type="GO" id="GO:0032580">
    <property type="term" value="C:Golgi cisterna membrane"/>
    <property type="evidence" value="ECO:0007669"/>
    <property type="project" value="Ensembl"/>
</dbReference>
<dbReference type="GO" id="GO:0000139">
    <property type="term" value="C:Golgi membrane"/>
    <property type="evidence" value="ECO:0007669"/>
    <property type="project" value="Ensembl"/>
</dbReference>
<dbReference type="GO" id="GO:0005811">
    <property type="term" value="C:lipid droplet"/>
    <property type="evidence" value="ECO:0000314"/>
    <property type="project" value="UniProtKB"/>
</dbReference>
<dbReference type="GO" id="GO:0098553">
    <property type="term" value="C:lumenal side of endoplasmic reticulum membrane"/>
    <property type="evidence" value="ECO:0000304"/>
    <property type="project" value="Reactome"/>
</dbReference>
<dbReference type="GO" id="GO:0016020">
    <property type="term" value="C:membrane"/>
    <property type="evidence" value="ECO:0007005"/>
    <property type="project" value="UniProtKB"/>
</dbReference>
<dbReference type="GO" id="GO:0044233">
    <property type="term" value="C:mitochondria-associated endoplasmic reticulum membrane contact site"/>
    <property type="evidence" value="ECO:0000314"/>
    <property type="project" value="UniProtKB"/>
</dbReference>
<dbReference type="GO" id="GO:0097038">
    <property type="term" value="C:perinuclear endoplasmic reticulum"/>
    <property type="evidence" value="ECO:0000314"/>
    <property type="project" value="AgBase"/>
</dbReference>
<dbReference type="GO" id="GO:0005886">
    <property type="term" value="C:plasma membrane"/>
    <property type="evidence" value="ECO:0000314"/>
    <property type="project" value="UniProtKB"/>
</dbReference>
<dbReference type="GO" id="GO:0042288">
    <property type="term" value="F:MHC class I protein binding"/>
    <property type="evidence" value="ECO:0007669"/>
    <property type="project" value="Ensembl"/>
</dbReference>
<dbReference type="GO" id="GO:0044877">
    <property type="term" value="F:protein-containing complex binding"/>
    <property type="evidence" value="ECO:0007669"/>
    <property type="project" value="Ensembl"/>
</dbReference>
<dbReference type="GO" id="GO:0006915">
    <property type="term" value="P:apoptotic process"/>
    <property type="evidence" value="ECO:0007669"/>
    <property type="project" value="UniProtKB-KW"/>
</dbReference>
<dbReference type="GO" id="GO:0006888">
    <property type="term" value="P:endoplasmic reticulum to Golgi vesicle-mediated transport"/>
    <property type="evidence" value="ECO:0000318"/>
    <property type="project" value="GO_Central"/>
</dbReference>
<dbReference type="GO" id="GO:0006886">
    <property type="term" value="P:intracellular protein transport"/>
    <property type="evidence" value="ECO:0007669"/>
    <property type="project" value="InterPro"/>
</dbReference>
<dbReference type="GO" id="GO:1904294">
    <property type="term" value="P:positive regulation of ERAD pathway"/>
    <property type="evidence" value="ECO:0000316"/>
    <property type="project" value="ParkinsonsUK-UCL"/>
</dbReference>
<dbReference type="GO" id="GO:2001244">
    <property type="term" value="P:positive regulation of intrinsic apoptotic signaling pathway"/>
    <property type="evidence" value="ECO:0000315"/>
    <property type="project" value="UniProtKB"/>
</dbReference>
<dbReference type="GO" id="GO:1904154">
    <property type="term" value="P:positive regulation of retrograde protein transport, ER to cytosol"/>
    <property type="evidence" value="ECO:0000314"/>
    <property type="project" value="ParkinsonsUK-UCL"/>
</dbReference>
<dbReference type="GO" id="GO:2000060">
    <property type="term" value="P:positive regulation of ubiquitin-dependent protein catabolic process"/>
    <property type="evidence" value="ECO:0000314"/>
    <property type="project" value="ParkinsonsUK-UCL"/>
</dbReference>
<dbReference type="GO" id="GO:0070973">
    <property type="term" value="P:protein localization to endoplasmic reticulum exit site"/>
    <property type="evidence" value="ECO:0000318"/>
    <property type="project" value="GO_Central"/>
</dbReference>
<dbReference type="GO" id="GO:0006626">
    <property type="term" value="P:protein targeting to mitochondrion"/>
    <property type="evidence" value="ECO:0000316"/>
    <property type="project" value="UniProtKB"/>
</dbReference>
<dbReference type="GO" id="GO:0034976">
    <property type="term" value="P:response to endoplasmic reticulum stress"/>
    <property type="evidence" value="ECO:0000314"/>
    <property type="project" value="UniProtKB"/>
</dbReference>
<dbReference type="GO" id="GO:0007283">
    <property type="term" value="P:spermatogenesis"/>
    <property type="evidence" value="ECO:0007669"/>
    <property type="project" value="Ensembl"/>
</dbReference>
<dbReference type="FunFam" id="1.20.5.110:FF:000011">
    <property type="entry name" value="B-cell receptor-associated protein 29"/>
    <property type="match status" value="1"/>
</dbReference>
<dbReference type="Gene3D" id="1.20.5.110">
    <property type="match status" value="1"/>
</dbReference>
<dbReference type="InterPro" id="IPR008417">
    <property type="entry name" value="BAP29/BAP31"/>
</dbReference>
<dbReference type="InterPro" id="IPR040463">
    <property type="entry name" value="BAP29/BAP31_N"/>
</dbReference>
<dbReference type="InterPro" id="IPR041672">
    <property type="entry name" value="Bap31/Bap29_C"/>
</dbReference>
<dbReference type="PANTHER" id="PTHR12701:SF15">
    <property type="entry name" value="B-CELL RECEPTOR-ASSOCIATED PROTEIN 31"/>
    <property type="match status" value="1"/>
</dbReference>
<dbReference type="PANTHER" id="PTHR12701">
    <property type="entry name" value="BCR-ASSOCIATED PROTEIN, BAP"/>
    <property type="match status" value="1"/>
</dbReference>
<dbReference type="Pfam" id="PF05529">
    <property type="entry name" value="Bap31"/>
    <property type="match status" value="1"/>
</dbReference>
<dbReference type="Pfam" id="PF18035">
    <property type="entry name" value="Bap31_Bap29_C"/>
    <property type="match status" value="1"/>
</dbReference>
<comment type="function">
    <text evidence="1 3 9 14 16">Functions as a chaperone protein (PubMed:18287538, PubMed:9396746). Is one of the most abundant endoplasmic reticulum (ER) proteins (PubMed:18287538, PubMed:9396746). Plays a role in the export of secreted proteins in the ER, the recognition of abnormally folded protein and their targeting to the ER associated-degradation (ERAD) (PubMed:18287538, PubMed:9396746). Also serves as a cargo receptor for the export of transmembrane proteins (By similarity). Plays a role in the assembly of the mitochondrial membrane respiratory chain NADH dehydrogenase (Complex I) by stimulating the translocation of NDUFS4 and NDUFB11 from the cytosol to the mitochondria via interaction with TOMM40 (PubMed:31206022). In response to ER stress, delocalizes from the ER-mitochondria contact sites and binds BCL2 (PubMed:31206022). May be involved in CASP8-mediated apoptosis (PubMed:10958671).</text>
</comment>
<comment type="subunit">
    <text evidence="1 6 8 10 14 15">Homodimer and heterodimer with BCAP29 (PubMed:23967155, PubMed:9334338). Binds CASP8 (isoform 9) as a complex containing BCAP31, BCAP29, BCL2 and/or BCL2L1 (PubMed:11917123, PubMed:31206022, PubMed:9334338). Forms a complex (via C-terminus) with TOMM40 which mediates the translocation of components of the mitochondrial membrane respiratory chain NADH dehydrogenase (Complex I) from the cytosol to the mitochondria; within the complex BCAP31 interacts directly with unprocessed and processed NDUFS4 and NDUFB11 (PubMed:31206022). Interacts with VDAC1 (PubMed:31206022). Interacts with VAMP3, VAMP1 and membrane IgD immunoglobulins (By similarity). Interacts with HACD2 (PubMed:15024066). Interacts with DNM1L; may form part of a larger protein complex at the endoplasmic reticulum-mitochondrial interface during mitochondrial fission (PubMed:24196833).</text>
</comment>
<comment type="subunit">
    <text evidence="13">(Microbial infection) Interacts (via C-terminus) with HRSV membrane protein SH; this interaction is direct.</text>
</comment>
<comment type="interaction">
    <interactant intactId="EBI-77683">
        <id>P51572</id>
    </interactant>
    <interactant intactId="EBI-77613">
        <id>P05067</id>
        <label>APP</label>
    </interactant>
    <organismsDiffer>false</organismsDiffer>
    <experiments>3</experiments>
</comment>
<comment type="interaction">
    <interactant intactId="EBI-77683">
        <id>P51572</id>
    </interactant>
    <interactant intactId="EBI-2548400">
        <id>Q9UHQ4</id>
        <label>BCAP29</label>
    </interactant>
    <organismsDiffer>false</organismsDiffer>
    <experiments>4</experiments>
</comment>
<comment type="interaction">
    <interactant intactId="EBI-77683">
        <id>P51572</id>
    </interactant>
    <interactant intactId="EBI-77694">
        <id>P10415</id>
        <label>BCL2</label>
    </interactant>
    <organismsDiffer>false</organismsDiffer>
    <experiments>2</experiments>
</comment>
<comment type="interaction">
    <interactant intactId="EBI-77683">
        <id>P51572</id>
    </interactant>
    <interactant intactId="EBI-78060">
        <id>Q14790</id>
        <label>CASP8</label>
    </interactant>
    <organismsDiffer>false</organismsDiffer>
    <experiments>3</experiments>
</comment>
<comment type="interaction">
    <interactant intactId="EBI-77683">
        <id>P51572</id>
    </interactant>
    <interactant intactId="EBI-349854">
        <id>P13569</id>
        <label>CFTR</label>
    </interactant>
    <organismsDiffer>false</organismsDiffer>
    <experiments>9</experiments>
</comment>
<comment type="interaction">
    <interactant intactId="EBI-77683">
        <id>P51572</id>
    </interactant>
    <interactant intactId="EBI-398977">
        <id>Q9BUN8</id>
        <label>DERL1</label>
    </interactant>
    <organismsDiffer>false</organismsDiffer>
    <experiments>3</experiments>
</comment>
<comment type="interaction">
    <interactant intactId="EBI-77683">
        <id>P51572</id>
    </interactant>
    <interactant intactId="EBI-3385283">
        <id>Q9Y3D6</id>
        <label>FIS1</label>
    </interactant>
    <organismsDiffer>false</organismsDiffer>
    <experiments>8</experiments>
</comment>
<comment type="interaction">
    <interactant intactId="EBI-77683">
        <id>P51572</id>
    </interactant>
    <interactant intactId="EBI-530257">
        <id>Q6Y1H2</id>
        <label>HACD2</label>
    </interactant>
    <organismsDiffer>false</organismsDiffer>
    <experiments>4</experiments>
</comment>
<comment type="interaction">
    <interactant intactId="EBI-77683">
        <id>P51572</id>
    </interactant>
    <interactant intactId="EBI-466029">
        <id>P42858</id>
        <label>HTT</label>
    </interactant>
    <organismsDiffer>false</organismsDiffer>
    <experiments>4</experiments>
</comment>
<comment type="interaction">
    <interactant intactId="EBI-77683">
        <id>P51572</id>
    </interactant>
    <interactant intactId="EBI-2432309">
        <id>Q92876</id>
        <label>KLK6</label>
    </interactant>
    <organismsDiffer>false</organismsDiffer>
    <experiments>3</experiments>
</comment>
<comment type="interaction">
    <interactant intactId="EBI-77683">
        <id>P51572</id>
    </interactant>
    <interactant intactId="EBI-1788819">
        <id>P60468</id>
        <label>SEC61B</label>
    </interactant>
    <organismsDiffer>false</organismsDiffer>
    <experiments>7</experiments>
</comment>
<comment type="interaction">
    <interactant intactId="EBI-77683">
        <id>P51572</id>
    </interactant>
    <interactant intactId="EBI-6268651">
        <id>Q9NPL8</id>
        <label>TIMMDC1</label>
    </interactant>
    <organismsDiffer>false</organismsDiffer>
    <experiments>3</experiments>
</comment>
<comment type="interaction">
    <interactant intactId="EBI-77683">
        <id>P51572</id>
    </interactant>
    <interactant intactId="EBI-1788852">
        <id>Q15629</id>
        <label>TRAM1</label>
    </interactant>
    <organismsDiffer>false</organismsDiffer>
    <experiments>5</experiments>
</comment>
<comment type="interaction">
    <interactant intactId="EBI-77683">
        <id>P51572</id>
    </interactant>
    <interactant intactId="EBI-11358177">
        <id>Q77YB1</id>
        <label>SH (1A)</label>
    </interactant>
    <organismsDiffer>true</organismsDiffer>
    <experiments>6</experiments>
</comment>
<comment type="subcellular location">
    <subcellularLocation>
        <location evidence="14 15 16">Endoplasmic reticulum membrane</location>
        <topology evidence="2">Multi-pass membrane protein</topology>
    </subcellularLocation>
    <subcellularLocation>
        <location evidence="4 16">Endoplasmic reticulum-Golgi intermediate compartment membrane</location>
        <topology evidence="2">Multi-pass membrane protein</topology>
    </subcellularLocation>
    <text evidence="14 16">May shuttle between the ER and the intermediate compartment/cis-Golgi complex (PubMed:9396746). Associates with the mitochondria-associated endoplasmic reticulum membrane via interaction with TOMM40 (PubMed:31206022).</text>
</comment>
<comment type="subcellular location">
    <text evidence="12">(Microbial infection) Upon SV40 infection, colocalizes with DNAJC18, DNAJB12 and DNAJB14 in punctate structures within the endoplasmic reticulum membrane.</text>
</comment>
<comment type="alternative products">
    <event type="alternative splicing"/>
    <isoform>
        <id>P51572-1</id>
        <name>1</name>
        <sequence type="displayed"/>
    </isoform>
    <isoform>
        <id>P51572-2</id>
        <name>2</name>
        <sequence type="described" ref="VSP_043116"/>
    </isoform>
</comment>
<comment type="tissue specificity">
    <text evidence="5">Ubiquitous. Highly expressed in neurons and discrete endocrine cells.</text>
</comment>
<comment type="PTM">
    <text>Cleaved by CASP8 and other caspases.</text>
</comment>
<comment type="disease" evidence="11">
    <disease id="DI-03930">
        <name>Deafness, dystonia, and cerebral hypomyelination</name>
        <acronym>DDCH</acronym>
        <description>An X-linked recessive syndrome characterized by sensorineural deafness, intellectual disability, dysmorphic facial features, dystonia, pyramidal signs, almost no psychomotor development, and hypomyelination on brain imaging.</description>
        <dbReference type="MIM" id="300475"/>
    </disease>
    <text>The disease is caused by variants affecting the gene represented in this entry.</text>
</comment>
<comment type="disease">
    <text evidence="7">BCAP31 is deleted in the chromosome Xq28 deletion syndrome which involves BCAP31 and the and the promoter region of ABCD1.</text>
</comment>
<comment type="similarity">
    <text evidence="19">Belongs to the BCAP29/BCAP31 family.</text>
</comment>
<keyword id="KW-0002">3D-structure</keyword>
<keyword id="KW-0025">Alternative splicing</keyword>
<keyword id="KW-0053">Apoptosis</keyword>
<keyword id="KW-0175">Coiled coil</keyword>
<keyword id="KW-0209">Deafness</keyword>
<keyword id="KW-0903">Direct protein sequencing</keyword>
<keyword id="KW-1023">Dystonia</keyword>
<keyword id="KW-0256">Endoplasmic reticulum</keyword>
<keyword id="KW-0931">ER-Golgi transport</keyword>
<keyword id="KW-0945">Host-virus interaction</keyword>
<keyword id="KW-0991">Intellectual disability</keyword>
<keyword id="KW-0472">Membrane</keyword>
<keyword id="KW-0653">Protein transport</keyword>
<keyword id="KW-1267">Proteomics identification</keyword>
<keyword id="KW-1185">Reference proteome</keyword>
<keyword id="KW-0812">Transmembrane</keyword>
<keyword id="KW-1133">Transmembrane helix</keyword>
<keyword id="KW-0813">Transport</keyword>